<accession>P69337</accession>
<accession>P09725</accession>
<comment type="subcellular location">
    <subcellularLocation>
        <location evidence="2">Membrane</location>
        <topology evidence="2">Multi-pass membrane protein</topology>
    </subcellularLocation>
</comment>
<comment type="developmental stage">
    <text>Expressed 34 hours post-infection.</text>
</comment>
<comment type="similarity">
    <text evidence="2">Belongs to the cytomegalovirus US12 family.</text>
</comment>
<gene>
    <name type="primary">US19</name>
</gene>
<sequence length="240" mass="26423">MLHVVPLEWTVEEVVPYLERLAVWLRASVLVAFQLTATVALSVLSWWLMPPPVAELCERGRDDDPPPLSHLSLVVPVGCLFLLLRGPSIDRCPRKLPLLLAYCLPHALAFLTLLMCQPSPQAFVGAALLALAVDLSCLGASLLGCDPGASLRRLWLPSVLSLLCATALGLWLLRAAAPFFLGLHATTLLTVTLMLIHDLSLITCQSSFPESFQPSLRLYVENVALFIGMYHLLRLWLWSP</sequence>
<protein>
    <recommendedName>
        <fullName>Transmembrane protein HWLF4</fullName>
    </recommendedName>
</protein>
<feature type="chain" id="PRO_0000115280" description="Transmembrane protein HWLF4">
    <location>
        <begin position="1"/>
        <end position="240"/>
    </location>
</feature>
<feature type="transmembrane region" description="Helical" evidence="1">
    <location>
        <begin position="29"/>
        <end position="49"/>
    </location>
</feature>
<feature type="transmembrane region" description="Helical" evidence="1">
    <location>
        <begin position="64"/>
        <end position="84"/>
    </location>
</feature>
<feature type="transmembrane region" description="Helical" evidence="1">
    <location>
        <begin position="96"/>
        <end position="116"/>
    </location>
</feature>
<feature type="transmembrane region" description="Helical" evidence="1">
    <location>
        <begin position="123"/>
        <end position="143"/>
    </location>
</feature>
<feature type="transmembrane region" description="Helical" evidence="1">
    <location>
        <begin position="154"/>
        <end position="174"/>
    </location>
</feature>
<feature type="transmembrane region" description="Helical" evidence="1">
    <location>
        <begin position="176"/>
        <end position="196"/>
    </location>
</feature>
<feature type="transmembrane region" description="Helical" evidence="1">
    <location>
        <begin position="218"/>
        <end position="238"/>
    </location>
</feature>
<reference key="1">
    <citation type="journal article" date="1993" name="J. Virol.">
        <title>Characterization of a structurally tricistronic gene of human cytomegalovirus composed of U(s)18, U(s)19, and U(s)20.</title>
        <authorList>
            <person name="Guo Y.-W."/>
            <person name="Huang E.S."/>
        </authorList>
    </citation>
    <scope>NUCLEOTIDE SEQUENCE [GENOMIC DNA]</scope>
</reference>
<organism>
    <name type="scientific">Human cytomegalovirus (strain Towne)</name>
    <name type="common">HHV-5</name>
    <name type="synonym">Human herpesvirus 5</name>
    <dbReference type="NCBI Taxonomy" id="10363"/>
    <lineage>
        <taxon>Viruses</taxon>
        <taxon>Duplodnaviria</taxon>
        <taxon>Heunggongvirae</taxon>
        <taxon>Peploviricota</taxon>
        <taxon>Herviviricetes</taxon>
        <taxon>Herpesvirales</taxon>
        <taxon>Orthoherpesviridae</taxon>
        <taxon>Betaherpesvirinae</taxon>
        <taxon>Cytomegalovirus</taxon>
        <taxon>Cytomegalovirus humanbeta5</taxon>
        <taxon>Human cytomegalovirus</taxon>
    </lineage>
</organism>
<dbReference type="EMBL" id="L04998">
    <property type="protein sequence ID" value="AAA45990.1"/>
    <property type="molecule type" value="Genomic_DNA"/>
</dbReference>
<dbReference type="PIR" id="C27231">
    <property type="entry name" value="QQBEG3"/>
</dbReference>
<dbReference type="GO" id="GO:0016020">
    <property type="term" value="C:membrane"/>
    <property type="evidence" value="ECO:0007669"/>
    <property type="project" value="UniProtKB-SubCell"/>
</dbReference>
<proteinExistence type="evidence at transcript level"/>
<evidence type="ECO:0000255" key="1"/>
<evidence type="ECO:0000305" key="2"/>
<keyword id="KW-0426">Late protein</keyword>
<keyword id="KW-0472">Membrane</keyword>
<keyword id="KW-0812">Transmembrane</keyword>
<keyword id="KW-1133">Transmembrane helix</keyword>
<organismHost>
    <name type="scientific">Homo sapiens</name>
    <name type="common">Human</name>
    <dbReference type="NCBI Taxonomy" id="9606"/>
</organismHost>
<name>US19_HCMVT</name>